<organism>
    <name type="scientific">Danio rerio</name>
    <name type="common">Zebrafish</name>
    <name type="synonym">Brachydanio rerio</name>
    <dbReference type="NCBI Taxonomy" id="7955"/>
    <lineage>
        <taxon>Eukaryota</taxon>
        <taxon>Metazoa</taxon>
        <taxon>Chordata</taxon>
        <taxon>Craniata</taxon>
        <taxon>Vertebrata</taxon>
        <taxon>Euteleostomi</taxon>
        <taxon>Actinopterygii</taxon>
        <taxon>Neopterygii</taxon>
        <taxon>Teleostei</taxon>
        <taxon>Ostariophysi</taxon>
        <taxon>Cypriniformes</taxon>
        <taxon>Danionidae</taxon>
        <taxon>Danioninae</taxon>
        <taxon>Danio</taxon>
    </lineage>
</organism>
<comment type="function">
    <text evidence="1 2">Atypical kinase involved in the biosynthesis of coenzyme Q, also named ubiquinone, an essential lipid-soluble electron transporter for aerobic cellular respiration (By similarity). Its substrate specificity is still unclear: may act as a protein kinase that mediates phosphorylation of COQ3 (By similarity). According to other reports, acts as a small molecule kinase, possibly a lipid kinase that phosphorylates a prenyl lipid in the ubiquinone biosynthesis pathway, as suggested by its ability to bind coenzyme Q lipid intermediates (By similarity). However, the small molecule kinase activity was not confirmed by another publication (By similarity). Shows an unusual selectivity for binding ADP over ATP (By similarity).</text>
</comment>
<comment type="activity regulation">
    <text evidence="1">Autoinhibited by the N-terminal domain, containing the KxGQ motif, that completely occludes the typical substrate binding pocket. Nucleotide-binding relieves inhibition.</text>
</comment>
<comment type="pathway">
    <text evidence="1">Cofactor biosynthesis; ubiquinone biosynthesis.</text>
</comment>
<comment type="subunit">
    <text evidence="1">Homodimer; homodimerizes via its transmembrane region. Interacts with the multi-subunit COQ enzyme complex.</text>
</comment>
<comment type="subcellular location">
    <subcellularLocation>
        <location evidence="1">Mitochondrion membrane</location>
        <topology evidence="3">Single-pass membrane protein</topology>
    </subcellularLocation>
</comment>
<comment type="alternative products">
    <event type="alternative splicing"/>
    <isoform>
        <id>Q5RGU1-1</id>
        <name>1</name>
        <sequence type="displayed"/>
    </isoform>
    <isoform>
        <id>Q5RGU1-2</id>
        <name>2</name>
        <sequence type="described" ref="VSP_022355"/>
    </isoform>
</comment>
<comment type="domain">
    <text evidence="1">Adopts an atypical protein kinase-like fold: while it adopts a core fold similar to that of well-characterized protein kinase-like domains. The KxGQ motif completely occludes the typical substrate binding pocket. Nucleotide-binding opens the substrate binding pocket and flips the active site from inside the hydrophobic core into a catalytically competent, solvent-exposed posture.</text>
</comment>
<comment type="similarity">
    <text evidence="6">Belongs to the protein kinase superfamily. ADCK protein kinase family.</text>
</comment>
<comment type="sequence caution" evidence="6">
    <conflict type="erroneous gene model prediction">
        <sequence resource="EMBL-CDS" id="CAI11905"/>
    </conflict>
</comment>
<comment type="sequence caution" evidence="6">
    <conflict type="erroneous gene model prediction">
        <sequence resource="EMBL-CDS" id="CAI12066"/>
    </conflict>
</comment>
<evidence type="ECO:0000250" key="1">
    <source>
        <dbReference type="UniProtKB" id="Q8NI60"/>
    </source>
</evidence>
<evidence type="ECO:0000250" key="2">
    <source>
        <dbReference type="UniProtKB" id="Q96D53"/>
    </source>
</evidence>
<evidence type="ECO:0000255" key="3"/>
<evidence type="ECO:0000256" key="4">
    <source>
        <dbReference type="SAM" id="MobiDB-lite"/>
    </source>
</evidence>
<evidence type="ECO:0000303" key="5">
    <source ref="2"/>
</evidence>
<evidence type="ECO:0000305" key="6"/>
<keyword id="KW-0025">Alternative splicing</keyword>
<keyword id="KW-0067">ATP-binding</keyword>
<keyword id="KW-0418">Kinase</keyword>
<keyword id="KW-0472">Membrane</keyword>
<keyword id="KW-0496">Mitochondrion</keyword>
<keyword id="KW-0547">Nucleotide-binding</keyword>
<keyword id="KW-1185">Reference proteome</keyword>
<keyword id="KW-0808">Transferase</keyword>
<keyword id="KW-0809">Transit peptide</keyword>
<keyword id="KW-0812">Transmembrane</keyword>
<keyword id="KW-1133">Transmembrane helix</keyword>
<keyword id="KW-0831">Ubiquinone biosynthesis</keyword>
<reference key="1">
    <citation type="journal article" date="2013" name="Nature">
        <title>The zebrafish reference genome sequence and its relationship to the human genome.</title>
        <authorList>
            <person name="Howe K."/>
            <person name="Clark M.D."/>
            <person name="Torroja C.F."/>
            <person name="Torrance J."/>
            <person name="Berthelot C."/>
            <person name="Muffato M."/>
            <person name="Collins J.E."/>
            <person name="Humphray S."/>
            <person name="McLaren K."/>
            <person name="Matthews L."/>
            <person name="McLaren S."/>
            <person name="Sealy I."/>
            <person name="Caccamo M."/>
            <person name="Churcher C."/>
            <person name="Scott C."/>
            <person name="Barrett J.C."/>
            <person name="Koch R."/>
            <person name="Rauch G.J."/>
            <person name="White S."/>
            <person name="Chow W."/>
            <person name="Kilian B."/>
            <person name="Quintais L.T."/>
            <person name="Guerra-Assuncao J.A."/>
            <person name="Zhou Y."/>
            <person name="Gu Y."/>
            <person name="Yen J."/>
            <person name="Vogel J.H."/>
            <person name="Eyre T."/>
            <person name="Redmond S."/>
            <person name="Banerjee R."/>
            <person name="Chi J."/>
            <person name="Fu B."/>
            <person name="Langley E."/>
            <person name="Maguire S.F."/>
            <person name="Laird G.K."/>
            <person name="Lloyd D."/>
            <person name="Kenyon E."/>
            <person name="Donaldson S."/>
            <person name="Sehra H."/>
            <person name="Almeida-King J."/>
            <person name="Loveland J."/>
            <person name="Trevanion S."/>
            <person name="Jones M."/>
            <person name="Quail M."/>
            <person name="Willey D."/>
            <person name="Hunt A."/>
            <person name="Burton J."/>
            <person name="Sims S."/>
            <person name="McLay K."/>
            <person name="Plumb B."/>
            <person name="Davis J."/>
            <person name="Clee C."/>
            <person name="Oliver K."/>
            <person name="Clark R."/>
            <person name="Riddle C."/>
            <person name="Elliot D."/>
            <person name="Threadgold G."/>
            <person name="Harden G."/>
            <person name="Ware D."/>
            <person name="Begum S."/>
            <person name="Mortimore B."/>
            <person name="Kerry G."/>
            <person name="Heath P."/>
            <person name="Phillimore B."/>
            <person name="Tracey A."/>
            <person name="Corby N."/>
            <person name="Dunn M."/>
            <person name="Johnson C."/>
            <person name="Wood J."/>
            <person name="Clark S."/>
            <person name="Pelan S."/>
            <person name="Griffiths G."/>
            <person name="Smith M."/>
            <person name="Glithero R."/>
            <person name="Howden P."/>
            <person name="Barker N."/>
            <person name="Lloyd C."/>
            <person name="Stevens C."/>
            <person name="Harley J."/>
            <person name="Holt K."/>
            <person name="Panagiotidis G."/>
            <person name="Lovell J."/>
            <person name="Beasley H."/>
            <person name="Henderson C."/>
            <person name="Gordon D."/>
            <person name="Auger K."/>
            <person name="Wright D."/>
            <person name="Collins J."/>
            <person name="Raisen C."/>
            <person name="Dyer L."/>
            <person name="Leung K."/>
            <person name="Robertson L."/>
            <person name="Ambridge K."/>
            <person name="Leongamornlert D."/>
            <person name="McGuire S."/>
            <person name="Gilderthorp R."/>
            <person name="Griffiths C."/>
            <person name="Manthravadi D."/>
            <person name="Nichol S."/>
            <person name="Barker G."/>
            <person name="Whitehead S."/>
            <person name="Kay M."/>
            <person name="Brown J."/>
            <person name="Murnane C."/>
            <person name="Gray E."/>
            <person name="Humphries M."/>
            <person name="Sycamore N."/>
            <person name="Barker D."/>
            <person name="Saunders D."/>
            <person name="Wallis J."/>
            <person name="Babbage A."/>
            <person name="Hammond S."/>
            <person name="Mashreghi-Mohammadi M."/>
            <person name="Barr L."/>
            <person name="Martin S."/>
            <person name="Wray P."/>
            <person name="Ellington A."/>
            <person name="Matthews N."/>
            <person name="Ellwood M."/>
            <person name="Woodmansey R."/>
            <person name="Clark G."/>
            <person name="Cooper J."/>
            <person name="Tromans A."/>
            <person name="Grafham D."/>
            <person name="Skuce C."/>
            <person name="Pandian R."/>
            <person name="Andrews R."/>
            <person name="Harrison E."/>
            <person name="Kimberley A."/>
            <person name="Garnett J."/>
            <person name="Fosker N."/>
            <person name="Hall R."/>
            <person name="Garner P."/>
            <person name="Kelly D."/>
            <person name="Bird C."/>
            <person name="Palmer S."/>
            <person name="Gehring I."/>
            <person name="Berger A."/>
            <person name="Dooley C.M."/>
            <person name="Ersan-Urun Z."/>
            <person name="Eser C."/>
            <person name="Geiger H."/>
            <person name="Geisler M."/>
            <person name="Karotki L."/>
            <person name="Kirn A."/>
            <person name="Konantz J."/>
            <person name="Konantz M."/>
            <person name="Oberlander M."/>
            <person name="Rudolph-Geiger S."/>
            <person name="Teucke M."/>
            <person name="Lanz C."/>
            <person name="Raddatz G."/>
            <person name="Osoegawa K."/>
            <person name="Zhu B."/>
            <person name="Rapp A."/>
            <person name="Widaa S."/>
            <person name="Langford C."/>
            <person name="Yang F."/>
            <person name="Schuster S.C."/>
            <person name="Carter N.P."/>
            <person name="Harrow J."/>
            <person name="Ning Z."/>
            <person name="Herrero J."/>
            <person name="Searle S.M."/>
            <person name="Enright A."/>
            <person name="Geisler R."/>
            <person name="Plasterk R.H."/>
            <person name="Lee C."/>
            <person name="Westerfield M."/>
            <person name="de Jong P.J."/>
            <person name="Zon L.I."/>
            <person name="Postlethwait J.H."/>
            <person name="Nusslein-Volhard C."/>
            <person name="Hubbard T.J."/>
            <person name="Roest Crollius H."/>
            <person name="Rogers J."/>
            <person name="Stemple D.L."/>
        </authorList>
    </citation>
    <scope>NUCLEOTIDE SEQUENCE [LARGE SCALE GENOMIC DNA]</scope>
    <source>
        <strain>Tuebingen</strain>
    </source>
</reference>
<reference key="2">
    <citation type="submission" date="2004-07" db="EMBL/GenBank/DDBJ databases">
        <authorList>
            <consortium name="NIH - Zebrafish Gene Collection (ZGC) project"/>
        </authorList>
    </citation>
    <scope>NUCLEOTIDE SEQUENCE [LARGE SCALE MRNA] (ISOFORM 2)</scope>
    <source>
        <strain>SJD</strain>
    </source>
</reference>
<feature type="transit peptide" description="Mitochondrion" evidence="3">
    <location>
        <begin position="1"/>
        <end status="unknown"/>
    </location>
</feature>
<feature type="chain" id="PRO_0000271796" description="Atypical kinase COQ8A, mitochondrial">
    <location>
        <begin status="unknown"/>
        <end position="619"/>
    </location>
</feature>
<feature type="transmembrane region" description="Helical" evidence="3">
    <location>
        <begin position="182"/>
        <end position="198"/>
    </location>
</feature>
<feature type="domain" description="Protein kinase">
    <location>
        <begin position="298"/>
        <end position="487"/>
    </location>
</feature>
<feature type="region of interest" description="Disordered" evidence="4">
    <location>
        <begin position="151"/>
        <end position="171"/>
    </location>
</feature>
<feature type="short sequence motif" description="KxGQ motif" evidence="1">
    <location>
        <begin position="245"/>
        <end position="248"/>
    </location>
</feature>
<feature type="short sequence motif" description="AAAS motif" evidence="1">
    <location>
        <begin position="306"/>
        <end position="309"/>
    </location>
</feature>
<feature type="active site" description="Proton acceptor" evidence="1">
    <location>
        <position position="457"/>
    </location>
</feature>
<feature type="binding site" evidence="1">
    <location>
        <position position="309"/>
    </location>
    <ligand>
        <name>ATP</name>
        <dbReference type="ChEBI" id="CHEBI:30616"/>
    </ligand>
</feature>
<feature type="binding site" evidence="1">
    <location>
        <position position="327"/>
    </location>
    <ligand>
        <name>ATP</name>
        <dbReference type="ChEBI" id="CHEBI:30616"/>
    </ligand>
</feature>
<feature type="binding site" evidence="1">
    <location>
        <begin position="414"/>
        <end position="417"/>
    </location>
    <ligand>
        <name>ATP</name>
        <dbReference type="ChEBI" id="CHEBI:30616"/>
    </ligand>
</feature>
<feature type="binding site" evidence="1">
    <location>
        <position position="462"/>
    </location>
    <ligand>
        <name>ATP</name>
        <dbReference type="ChEBI" id="CHEBI:30616"/>
    </ligand>
</feature>
<feature type="binding site" evidence="1">
    <location>
        <position position="476"/>
    </location>
    <ligand>
        <name>ATP</name>
        <dbReference type="ChEBI" id="CHEBI:30616"/>
    </ligand>
</feature>
<feature type="splice variant" id="VSP_022355" description="In isoform 2." evidence="5">
    <location>
        <begin position="25"/>
        <end position="263"/>
    </location>
</feature>
<feature type="sequence conflict" description="In Ref. 2; AAH76083." evidence="6" ref="2">
    <original>S</original>
    <variation>G</variation>
    <location>
        <position position="404"/>
    </location>
</feature>
<dbReference type="EC" id="2.7.-.-" evidence="1"/>
<dbReference type="EMBL" id="BX569783">
    <property type="protein sequence ID" value="CAI11905.1"/>
    <property type="status" value="ALT_SEQ"/>
    <property type="molecule type" value="Genomic_DNA"/>
</dbReference>
<dbReference type="EMBL" id="BX649588">
    <property type="protein sequence ID" value="CAI11905.1"/>
    <property type="status" value="JOINED"/>
    <property type="molecule type" value="Genomic_DNA"/>
</dbReference>
<dbReference type="EMBL" id="BX649588">
    <property type="protein sequence ID" value="CAI12066.1"/>
    <property type="status" value="ALT_SEQ"/>
    <property type="molecule type" value="Genomic_DNA"/>
</dbReference>
<dbReference type="EMBL" id="BX569783">
    <property type="protein sequence ID" value="CAI12066.1"/>
    <property type="status" value="JOINED"/>
    <property type="molecule type" value="Genomic_DNA"/>
</dbReference>
<dbReference type="EMBL" id="BC076083">
    <property type="protein sequence ID" value="AAH76083.1"/>
    <property type="molecule type" value="mRNA"/>
</dbReference>
<dbReference type="RefSeq" id="NP_001002728.2">
    <molecule id="Q5RGU1-1"/>
    <property type="nucleotide sequence ID" value="NM_001002728.2"/>
</dbReference>
<dbReference type="SMR" id="Q5RGU1"/>
<dbReference type="FunCoup" id="Q5RGU1">
    <property type="interactions" value="1161"/>
</dbReference>
<dbReference type="STRING" id="7955.ENSDARP00000024635"/>
<dbReference type="PaxDb" id="7955-ENSDARP00000024635"/>
<dbReference type="DNASU" id="437001"/>
<dbReference type="Ensembl" id="ENSDART00000020153">
    <molecule id="Q5RGU1-1"/>
    <property type="protein sequence ID" value="ENSDARP00000024635"/>
    <property type="gene ID" value="ENSDARG00000020123"/>
</dbReference>
<dbReference type="GeneID" id="437001"/>
<dbReference type="KEGG" id="dre:437001"/>
<dbReference type="AGR" id="ZFIN:ZDB-GENE-040718-487"/>
<dbReference type="CTD" id="437001"/>
<dbReference type="ZFIN" id="ZDB-GENE-040718-487">
    <property type="gene designation" value="coq8aa"/>
</dbReference>
<dbReference type="eggNOG" id="KOG1234">
    <property type="taxonomic scope" value="Eukaryota"/>
</dbReference>
<dbReference type="HOGENOM" id="CLU_006533_9_0_1"/>
<dbReference type="InParanoid" id="Q5RGU1"/>
<dbReference type="OMA" id="KQVHRQM"/>
<dbReference type="OrthoDB" id="201153at2759"/>
<dbReference type="TreeFam" id="TF300630"/>
<dbReference type="Reactome" id="R-DRE-2142789">
    <property type="pathway name" value="Ubiquinol biosynthesis"/>
</dbReference>
<dbReference type="UniPathway" id="UPA00232"/>
<dbReference type="PRO" id="PR:Q5RGU1"/>
<dbReference type="Proteomes" id="UP000000437">
    <property type="component" value="Chromosome 20"/>
</dbReference>
<dbReference type="Bgee" id="ENSDARG00000020123">
    <property type="expression patterns" value="Expressed in muscle tissue and 29 other cell types or tissues"/>
</dbReference>
<dbReference type="ExpressionAtlas" id="Q5RGU1">
    <property type="expression patterns" value="baseline and differential"/>
</dbReference>
<dbReference type="GO" id="GO:0031966">
    <property type="term" value="C:mitochondrial membrane"/>
    <property type="evidence" value="ECO:0007669"/>
    <property type="project" value="UniProtKB-SubCell"/>
</dbReference>
<dbReference type="GO" id="GO:0005739">
    <property type="term" value="C:mitochondrion"/>
    <property type="evidence" value="ECO:0000250"/>
    <property type="project" value="UniProtKB"/>
</dbReference>
<dbReference type="GO" id="GO:0043531">
    <property type="term" value="F:ADP binding"/>
    <property type="evidence" value="ECO:0000250"/>
    <property type="project" value="UniProtKB"/>
</dbReference>
<dbReference type="GO" id="GO:0005524">
    <property type="term" value="F:ATP binding"/>
    <property type="evidence" value="ECO:0007669"/>
    <property type="project" value="UniProtKB-KW"/>
</dbReference>
<dbReference type="GO" id="GO:0016301">
    <property type="term" value="F:kinase activity"/>
    <property type="evidence" value="ECO:0000250"/>
    <property type="project" value="UniProtKB"/>
</dbReference>
<dbReference type="GO" id="GO:0004672">
    <property type="term" value="F:protein kinase activity"/>
    <property type="evidence" value="ECO:0000250"/>
    <property type="project" value="UniProtKB"/>
</dbReference>
<dbReference type="GO" id="GO:0016310">
    <property type="term" value="P:phosphorylation"/>
    <property type="evidence" value="ECO:0000250"/>
    <property type="project" value="UniProtKB"/>
</dbReference>
<dbReference type="GO" id="GO:0006744">
    <property type="term" value="P:ubiquinone biosynthetic process"/>
    <property type="evidence" value="ECO:0000250"/>
    <property type="project" value="UniProtKB"/>
</dbReference>
<dbReference type="CDD" id="cd13970">
    <property type="entry name" value="ABC1_ADCK3"/>
    <property type="match status" value="1"/>
</dbReference>
<dbReference type="InterPro" id="IPR004147">
    <property type="entry name" value="ABC1_dom"/>
</dbReference>
<dbReference type="InterPro" id="IPR034646">
    <property type="entry name" value="ADCK3_dom"/>
</dbReference>
<dbReference type="InterPro" id="IPR051409">
    <property type="entry name" value="Atypical_kinase_ADCK"/>
</dbReference>
<dbReference type="InterPro" id="IPR011009">
    <property type="entry name" value="Kinase-like_dom_sf"/>
</dbReference>
<dbReference type="PANTHER" id="PTHR43851">
    <property type="match status" value="1"/>
</dbReference>
<dbReference type="PANTHER" id="PTHR43851:SF1">
    <property type="entry name" value="ATYPICAL KINASE COQ8A, MITOCHONDRIAL"/>
    <property type="match status" value="1"/>
</dbReference>
<dbReference type="Pfam" id="PF03109">
    <property type="entry name" value="ABC1"/>
    <property type="match status" value="1"/>
</dbReference>
<dbReference type="SUPFAM" id="SSF56112">
    <property type="entry name" value="Protein kinase-like (PK-like)"/>
    <property type="match status" value="1"/>
</dbReference>
<gene>
    <name evidence="1" type="primary">coq8a</name>
    <name evidence="1" type="synonym">adck3</name>
    <name evidence="1" type="synonym">cabc1</name>
    <name evidence="5" type="ORF">zgc:92578</name>
</gene>
<name>COQ8A_DANRE</name>
<sequence>MAGDMLLLMRGLARLSQAVIETQANSLRSGGVQTMQMTAEQAMGVAMQKIQEFTGSQQSVSDFSADMDSKYDFTASEQNFESAAHGGLDSDSVFRDANTGAANTYSQAQGKSKLFDGYKDPTSQFTGHTRSYHQDHSSVGGITAEDIEKAREAKQNGSKPHKQMLSERARERKVPVTRLGRLANFGGLAVGLGIGALAEVAKKSLRSEDKNGNKKAVLDSSPFLSEANAERIVRTLCKVRGAALKLGQMLSIQDDAFINPQLAKIFERVRQSADFMPIKQMTKALSNDLGPNWRDKLEMFEERPFAAASIGQVHLARMKDGREVAMKIQYPGVAQSINSDVNNLMTVLSMSNALPEGLFPEHLIDVMRRELALECDYIREAKCARKFKELLKDHPFFYVPDVISELSSQHVLTTELVPGFPLDQAEALTQELKNEICKNILNLCLRELFEFRYMQTDPNWSNFFYDPQTHRVALLDFGATRGFDESFTDVYIEIIKAAADGNREGVLKQSIDMKFLTGYESKAMVNAHVDAVMILGEAFASEEPFDFGAQSTTERIHNLIPVMLKQRLIPPPEETYSLHRKMGGSFLICSRLNAKISCKDMFEAAYSNYWSGRKKGPSQ</sequence>
<proteinExistence type="evidence at transcript level"/>
<accession>Q5RGU1</accession>
<accession>G1K2I4</accession>
<accession>Q6DH95</accession>
<protein>
    <recommendedName>
        <fullName evidence="6">Atypical kinase COQ8A, mitochondrial</fullName>
        <ecNumber evidence="1">2.7.-.-</ecNumber>
    </recommendedName>
    <alternativeName>
        <fullName evidence="1">Chaperone activity of bc1 complex-like</fullName>
        <shortName evidence="1">Chaperone-ABC1-like</shortName>
    </alternativeName>
    <alternativeName>
        <fullName evidence="1">Coenzyme Q protein 8A</fullName>
    </alternativeName>
    <alternativeName>
        <fullName evidence="1">aarF domain-containing protein kinase 3</fullName>
    </alternativeName>
</protein>